<gene>
    <name evidence="1" type="primary">fusA</name>
    <name type="ordered locus">Krad_0684</name>
</gene>
<sequence>MAQDVLTDLTKVRNIGIMAHIDAGKTTTTERILFYTGINYKIGEVHDGAATMDWMAQEQERGITITSAATTCFWEGTQINIIDTPGHVDFTVEVERSLRVLDGAVAVFDGKEGVEPQSETVWRQADKYDVPRICFVNKMDKLGADFFFTVGTISDRLGAEPLVMQLPIGAENSFAGVVDLVHMRALTWRGEVQMGADYTVEEIPADLLDQANEYRAKLVERVAETDEALLEKYLGGEDLTPEEIKAAVRKLTINSELYPIFCGSAFKNKGVQPMLDAVIDYLPSPLDVKPMIGHKVGDESVEIIRKPDATEPFSALAFKVAAHPFFGKLTYVRVYSGVVAAGSQVVNSTKGKKERIGKLFQMHSNKENPVDEARAGHIYAMIGLKETTTGDTLSDSAQQVVLESMTFPEPVISVAIEPKTKGDQEKLGTAIQRLAEEDPTFQVELDQETGQTIIKGMGELHLDILVDRMKREYKVEANVGKPQVAYRETIRRAVLKEDYVHKKQTGGSGQYAKVQVSIEPLDTADGTFYEFVNAVTGGRVPREYIPSVDNGIQEAMQEGVVAGYPLVGIKASLIDGAAHDVDSSEMAFKIAGKMVLREAVRKAQPVLLEPVMAVEVRTPADYMGDVIGDLNSRRGQIESMEDVSGAKLVKASVPLSEMFGYVGDLRSKTQGRAVYSMQFSNYAEVPRNVADEIVKKVRGE</sequence>
<keyword id="KW-0963">Cytoplasm</keyword>
<keyword id="KW-0251">Elongation factor</keyword>
<keyword id="KW-0342">GTP-binding</keyword>
<keyword id="KW-0547">Nucleotide-binding</keyword>
<keyword id="KW-0648">Protein biosynthesis</keyword>
<keyword id="KW-1185">Reference proteome</keyword>
<accession>A6W5T4</accession>
<protein>
    <recommendedName>
        <fullName evidence="1">Elongation factor G</fullName>
        <shortName evidence="1">EF-G</shortName>
    </recommendedName>
</protein>
<feature type="chain" id="PRO_1000074961" description="Elongation factor G">
    <location>
        <begin position="1"/>
        <end position="700"/>
    </location>
</feature>
<feature type="domain" description="tr-type G">
    <location>
        <begin position="10"/>
        <end position="286"/>
    </location>
</feature>
<feature type="binding site" evidence="1">
    <location>
        <begin position="19"/>
        <end position="26"/>
    </location>
    <ligand>
        <name>GTP</name>
        <dbReference type="ChEBI" id="CHEBI:37565"/>
    </ligand>
</feature>
<feature type="binding site" evidence="1">
    <location>
        <begin position="83"/>
        <end position="87"/>
    </location>
    <ligand>
        <name>GTP</name>
        <dbReference type="ChEBI" id="CHEBI:37565"/>
    </ligand>
</feature>
<feature type="binding site" evidence="1">
    <location>
        <begin position="137"/>
        <end position="140"/>
    </location>
    <ligand>
        <name>GTP</name>
        <dbReference type="ChEBI" id="CHEBI:37565"/>
    </ligand>
</feature>
<proteinExistence type="inferred from homology"/>
<dbReference type="EMBL" id="CP000750">
    <property type="protein sequence ID" value="ABS02173.1"/>
    <property type="molecule type" value="Genomic_DNA"/>
</dbReference>
<dbReference type="RefSeq" id="WP_012084985.1">
    <property type="nucleotide sequence ID" value="NC_009664.2"/>
</dbReference>
<dbReference type="SMR" id="A6W5T4"/>
<dbReference type="STRING" id="266940.Krad_0684"/>
<dbReference type="KEGG" id="kra:Krad_0684"/>
<dbReference type="eggNOG" id="COG0480">
    <property type="taxonomic scope" value="Bacteria"/>
</dbReference>
<dbReference type="HOGENOM" id="CLU_002794_4_1_11"/>
<dbReference type="OrthoDB" id="9801472at2"/>
<dbReference type="Proteomes" id="UP000001116">
    <property type="component" value="Chromosome"/>
</dbReference>
<dbReference type="GO" id="GO:0005737">
    <property type="term" value="C:cytoplasm"/>
    <property type="evidence" value="ECO:0007669"/>
    <property type="project" value="UniProtKB-SubCell"/>
</dbReference>
<dbReference type="GO" id="GO:0005525">
    <property type="term" value="F:GTP binding"/>
    <property type="evidence" value="ECO:0007669"/>
    <property type="project" value="UniProtKB-UniRule"/>
</dbReference>
<dbReference type="GO" id="GO:0003924">
    <property type="term" value="F:GTPase activity"/>
    <property type="evidence" value="ECO:0007669"/>
    <property type="project" value="InterPro"/>
</dbReference>
<dbReference type="GO" id="GO:0003746">
    <property type="term" value="F:translation elongation factor activity"/>
    <property type="evidence" value="ECO:0007669"/>
    <property type="project" value="UniProtKB-UniRule"/>
</dbReference>
<dbReference type="GO" id="GO:0032790">
    <property type="term" value="P:ribosome disassembly"/>
    <property type="evidence" value="ECO:0007669"/>
    <property type="project" value="TreeGrafter"/>
</dbReference>
<dbReference type="CDD" id="cd01886">
    <property type="entry name" value="EF-G"/>
    <property type="match status" value="1"/>
</dbReference>
<dbReference type="CDD" id="cd16262">
    <property type="entry name" value="EFG_III"/>
    <property type="match status" value="1"/>
</dbReference>
<dbReference type="CDD" id="cd01434">
    <property type="entry name" value="EFG_mtEFG1_IV"/>
    <property type="match status" value="1"/>
</dbReference>
<dbReference type="CDD" id="cd03713">
    <property type="entry name" value="EFG_mtEFG_C"/>
    <property type="match status" value="1"/>
</dbReference>
<dbReference type="CDD" id="cd04088">
    <property type="entry name" value="EFG_mtEFG_II"/>
    <property type="match status" value="1"/>
</dbReference>
<dbReference type="FunFam" id="2.40.30.10:FF:000006">
    <property type="entry name" value="Elongation factor G"/>
    <property type="match status" value="1"/>
</dbReference>
<dbReference type="FunFam" id="3.30.230.10:FF:000003">
    <property type="entry name" value="Elongation factor G"/>
    <property type="match status" value="1"/>
</dbReference>
<dbReference type="FunFam" id="3.30.70.240:FF:000001">
    <property type="entry name" value="Elongation factor G"/>
    <property type="match status" value="1"/>
</dbReference>
<dbReference type="FunFam" id="3.30.70.870:FF:000001">
    <property type="entry name" value="Elongation factor G"/>
    <property type="match status" value="1"/>
</dbReference>
<dbReference type="FunFam" id="3.40.50.300:FF:000029">
    <property type="entry name" value="Elongation factor G"/>
    <property type="match status" value="1"/>
</dbReference>
<dbReference type="Gene3D" id="3.30.230.10">
    <property type="match status" value="1"/>
</dbReference>
<dbReference type="Gene3D" id="3.30.70.240">
    <property type="match status" value="1"/>
</dbReference>
<dbReference type="Gene3D" id="3.30.70.870">
    <property type="entry name" value="Elongation Factor G (Translational Gtpase), domain 3"/>
    <property type="match status" value="1"/>
</dbReference>
<dbReference type="Gene3D" id="3.40.50.300">
    <property type="entry name" value="P-loop containing nucleotide triphosphate hydrolases"/>
    <property type="match status" value="1"/>
</dbReference>
<dbReference type="Gene3D" id="2.40.30.10">
    <property type="entry name" value="Translation factors"/>
    <property type="match status" value="1"/>
</dbReference>
<dbReference type="HAMAP" id="MF_00054_B">
    <property type="entry name" value="EF_G_EF_2_B"/>
    <property type="match status" value="1"/>
</dbReference>
<dbReference type="InterPro" id="IPR041095">
    <property type="entry name" value="EFG_II"/>
</dbReference>
<dbReference type="InterPro" id="IPR009022">
    <property type="entry name" value="EFG_III"/>
</dbReference>
<dbReference type="InterPro" id="IPR035647">
    <property type="entry name" value="EFG_III/V"/>
</dbReference>
<dbReference type="InterPro" id="IPR047872">
    <property type="entry name" value="EFG_IV"/>
</dbReference>
<dbReference type="InterPro" id="IPR035649">
    <property type="entry name" value="EFG_V"/>
</dbReference>
<dbReference type="InterPro" id="IPR000640">
    <property type="entry name" value="EFG_V-like"/>
</dbReference>
<dbReference type="InterPro" id="IPR004161">
    <property type="entry name" value="EFTu-like_2"/>
</dbReference>
<dbReference type="InterPro" id="IPR031157">
    <property type="entry name" value="G_TR_CS"/>
</dbReference>
<dbReference type="InterPro" id="IPR027417">
    <property type="entry name" value="P-loop_NTPase"/>
</dbReference>
<dbReference type="InterPro" id="IPR020568">
    <property type="entry name" value="Ribosomal_Su5_D2-typ_SF"/>
</dbReference>
<dbReference type="InterPro" id="IPR014721">
    <property type="entry name" value="Ribsml_uS5_D2-typ_fold_subgr"/>
</dbReference>
<dbReference type="InterPro" id="IPR005225">
    <property type="entry name" value="Small_GTP-bd"/>
</dbReference>
<dbReference type="InterPro" id="IPR000795">
    <property type="entry name" value="T_Tr_GTP-bd_dom"/>
</dbReference>
<dbReference type="InterPro" id="IPR009000">
    <property type="entry name" value="Transl_B-barrel_sf"/>
</dbReference>
<dbReference type="InterPro" id="IPR004540">
    <property type="entry name" value="Transl_elong_EFG/EF2"/>
</dbReference>
<dbReference type="InterPro" id="IPR005517">
    <property type="entry name" value="Transl_elong_EFG/EF2_IV"/>
</dbReference>
<dbReference type="NCBIfam" id="TIGR00484">
    <property type="entry name" value="EF-G"/>
    <property type="match status" value="1"/>
</dbReference>
<dbReference type="NCBIfam" id="NF009381">
    <property type="entry name" value="PRK12740.1-5"/>
    <property type="match status" value="1"/>
</dbReference>
<dbReference type="NCBIfam" id="TIGR00231">
    <property type="entry name" value="small_GTP"/>
    <property type="match status" value="1"/>
</dbReference>
<dbReference type="PANTHER" id="PTHR43261:SF1">
    <property type="entry name" value="RIBOSOME-RELEASING FACTOR 2, MITOCHONDRIAL"/>
    <property type="match status" value="1"/>
</dbReference>
<dbReference type="PANTHER" id="PTHR43261">
    <property type="entry name" value="TRANSLATION ELONGATION FACTOR G-RELATED"/>
    <property type="match status" value="1"/>
</dbReference>
<dbReference type="Pfam" id="PF00679">
    <property type="entry name" value="EFG_C"/>
    <property type="match status" value="1"/>
</dbReference>
<dbReference type="Pfam" id="PF14492">
    <property type="entry name" value="EFG_III"/>
    <property type="match status" value="1"/>
</dbReference>
<dbReference type="Pfam" id="PF03764">
    <property type="entry name" value="EFG_IV"/>
    <property type="match status" value="1"/>
</dbReference>
<dbReference type="Pfam" id="PF00009">
    <property type="entry name" value="GTP_EFTU"/>
    <property type="match status" value="1"/>
</dbReference>
<dbReference type="Pfam" id="PF03144">
    <property type="entry name" value="GTP_EFTU_D2"/>
    <property type="match status" value="1"/>
</dbReference>
<dbReference type="PRINTS" id="PR00315">
    <property type="entry name" value="ELONGATNFCT"/>
</dbReference>
<dbReference type="SMART" id="SM00838">
    <property type="entry name" value="EFG_C"/>
    <property type="match status" value="1"/>
</dbReference>
<dbReference type="SMART" id="SM00889">
    <property type="entry name" value="EFG_IV"/>
    <property type="match status" value="1"/>
</dbReference>
<dbReference type="SUPFAM" id="SSF54980">
    <property type="entry name" value="EF-G C-terminal domain-like"/>
    <property type="match status" value="2"/>
</dbReference>
<dbReference type="SUPFAM" id="SSF52540">
    <property type="entry name" value="P-loop containing nucleoside triphosphate hydrolases"/>
    <property type="match status" value="1"/>
</dbReference>
<dbReference type="SUPFAM" id="SSF54211">
    <property type="entry name" value="Ribosomal protein S5 domain 2-like"/>
    <property type="match status" value="1"/>
</dbReference>
<dbReference type="SUPFAM" id="SSF50447">
    <property type="entry name" value="Translation proteins"/>
    <property type="match status" value="1"/>
</dbReference>
<dbReference type="PROSITE" id="PS00301">
    <property type="entry name" value="G_TR_1"/>
    <property type="match status" value="1"/>
</dbReference>
<dbReference type="PROSITE" id="PS51722">
    <property type="entry name" value="G_TR_2"/>
    <property type="match status" value="1"/>
</dbReference>
<evidence type="ECO:0000255" key="1">
    <source>
        <dbReference type="HAMAP-Rule" id="MF_00054"/>
    </source>
</evidence>
<reference key="1">
    <citation type="journal article" date="2008" name="PLoS ONE">
        <title>Survival in nuclear waste, extreme resistance, and potential applications gleaned from the genome sequence of Kineococcus radiotolerans SRS30216.</title>
        <authorList>
            <person name="Bagwell C.E."/>
            <person name="Bhat S."/>
            <person name="Hawkins G.M."/>
            <person name="Smith B.W."/>
            <person name="Biswas T."/>
            <person name="Hoover T.R."/>
            <person name="Saunders E."/>
            <person name="Han C.S."/>
            <person name="Tsodikov O.V."/>
            <person name="Shimkets L.J."/>
        </authorList>
    </citation>
    <scope>NUCLEOTIDE SEQUENCE [LARGE SCALE GENOMIC DNA]</scope>
    <source>
        <strain>ATCC BAA-149 / DSM 14245 / SRS30216</strain>
    </source>
</reference>
<organism>
    <name type="scientific">Kineococcus radiotolerans (strain ATCC BAA-149 / DSM 14245 / SRS30216)</name>
    <dbReference type="NCBI Taxonomy" id="266940"/>
    <lineage>
        <taxon>Bacteria</taxon>
        <taxon>Bacillati</taxon>
        <taxon>Actinomycetota</taxon>
        <taxon>Actinomycetes</taxon>
        <taxon>Kineosporiales</taxon>
        <taxon>Kineosporiaceae</taxon>
        <taxon>Kineococcus</taxon>
    </lineage>
</organism>
<comment type="function">
    <text evidence="1">Catalyzes the GTP-dependent ribosomal translocation step during translation elongation. During this step, the ribosome changes from the pre-translocational (PRE) to the post-translocational (POST) state as the newly formed A-site-bound peptidyl-tRNA and P-site-bound deacylated tRNA move to the P and E sites, respectively. Catalyzes the coordinated movement of the two tRNA molecules, the mRNA and conformational changes in the ribosome.</text>
</comment>
<comment type="subcellular location">
    <subcellularLocation>
        <location evidence="1">Cytoplasm</location>
    </subcellularLocation>
</comment>
<comment type="similarity">
    <text evidence="1">Belongs to the TRAFAC class translation factor GTPase superfamily. Classic translation factor GTPase family. EF-G/EF-2 subfamily.</text>
</comment>
<name>EFG_KINRD</name>